<proteinExistence type="evidence at protein level"/>
<comment type="function">
    <text evidence="3 4 9">Ion channel which is permeable to small monovalent cations. Shown not to be H+-ion gated. May be mechanosensitive and is required for growth and muscle development.</text>
</comment>
<comment type="subcellular location">
    <subcellularLocation>
        <location>Membrane</location>
        <topology>Multi-pass membrane protein</topology>
    </subcellularLocation>
</comment>
<comment type="alternative products">
    <event type="alternative splicing"/>
    <isoform>
        <id>Q09274-1</id>
        <name>b</name>
        <sequence type="displayed"/>
    </isoform>
    <isoform>
        <id>Q09274-2</id>
        <name>a</name>
        <sequence type="described" ref="VSP_025926"/>
    </isoform>
</comment>
<comment type="tissue specificity">
    <text evidence="8">Expressed in body wall muscle.</text>
</comment>
<comment type="similarity">
    <text evidence="10">Belongs to the amiloride-sensitive sodium channel (TC 1.A.6) family.</text>
</comment>
<feature type="chain" id="PRO_0000181314" description="Degenerin-like protein unc-105">
    <location>
        <begin position="1"/>
        <end position="887"/>
    </location>
</feature>
<feature type="topological domain" description="Cytoplasmic" evidence="1">
    <location>
        <begin position="1"/>
        <end position="93"/>
    </location>
</feature>
<feature type="transmembrane region" description="Helical" evidence="1">
    <location>
        <begin position="94"/>
        <end position="114"/>
    </location>
</feature>
<feature type="topological domain" description="Extracellular" evidence="1">
    <location>
        <begin position="115"/>
        <end position="698"/>
    </location>
</feature>
<feature type="transmembrane region" description="Helical" evidence="1">
    <location>
        <begin position="699"/>
        <end position="719"/>
    </location>
</feature>
<feature type="topological domain" description="Cytoplasmic" evidence="1">
    <location>
        <begin position="720"/>
        <end position="887"/>
    </location>
</feature>
<feature type="region of interest" description="Disordered" evidence="2">
    <location>
        <begin position="1"/>
        <end position="33"/>
    </location>
</feature>
<feature type="region of interest" description="Disordered" evidence="2">
    <location>
        <begin position="794"/>
        <end position="815"/>
    </location>
</feature>
<feature type="region of interest" description="Disordered" evidence="2">
    <location>
        <begin position="859"/>
        <end position="887"/>
    </location>
</feature>
<feature type="glycosylation site" description="N-linked (GlcNAc...) asparagine" evidence="1">
    <location>
        <position position="244"/>
    </location>
</feature>
<feature type="glycosylation site" description="N-linked (GlcNAc...) asparagine" evidence="1">
    <location>
        <position position="450"/>
    </location>
</feature>
<feature type="glycosylation site" description="N-linked (GlcNAc...) asparagine" evidence="1">
    <location>
        <position position="473"/>
    </location>
</feature>
<feature type="glycosylation site" description="N-linked (GlcNAc...) asparagine" evidence="1">
    <location>
        <position position="581"/>
    </location>
</feature>
<feature type="glycosylation site" description="N-linked (GlcNAc...) asparagine" evidence="5">
    <location>
        <position position="599"/>
    </location>
</feature>
<feature type="splice variant" id="VSP_025926" description="In isoform a." evidence="10">
    <original>MAEDRIKSKLRRPASIESTMSSRTKPRHKPSPMSILMPHLMVGESFRKYRPHG</original>
    <variation>MLHLAASRNSQINSS</variation>
    <location>
        <begin position="1"/>
        <end position="53"/>
    </location>
</feature>
<feature type="mutagenesis site" description="In n490; worms appear reduced in size with defective body muscles." evidence="6 7">
    <original>P</original>
    <variation>S</variation>
    <location>
        <position position="134"/>
    </location>
</feature>
<feature type="mutagenesis site" description="In n1274; worms appear reduced in size with defective body muscles." evidence="6 7">
    <original>P</original>
    <variation>T</variation>
    <location>
        <position position="134"/>
    </location>
</feature>
<feature type="mutagenesis site" description="In n506; worms appear hypercontracted and paralyzed." evidence="6 7">
    <original>E</original>
    <variation>K</variation>
    <location>
        <position position="677"/>
    </location>
</feature>
<evidence type="ECO:0000255" key="1"/>
<evidence type="ECO:0000256" key="2">
    <source>
        <dbReference type="SAM" id="MobiDB-lite"/>
    </source>
</evidence>
<evidence type="ECO:0000269" key="3">
    <source>
    </source>
</evidence>
<evidence type="ECO:0000269" key="4">
    <source>
    </source>
</evidence>
<evidence type="ECO:0000269" key="5">
    <source>
    </source>
</evidence>
<evidence type="ECO:0000269" key="6">
    <source>
    </source>
</evidence>
<evidence type="ECO:0000269" key="7">
    <source>
    </source>
</evidence>
<evidence type="ECO:0000269" key="8">
    <source>
    </source>
</evidence>
<evidence type="ECO:0000269" key="9">
    <source>
    </source>
</evidence>
<evidence type="ECO:0000305" key="10"/>
<reference key="1">
    <citation type="journal article" date="1996" name="Science">
        <title>Interaction between a putative mechanosensory membrane channel and a collagen.</title>
        <authorList>
            <person name="Liu J."/>
            <person name="Schrank B."/>
            <person name="Waterston R.H."/>
        </authorList>
    </citation>
    <scope>NUCLEOTIDE SEQUENCE [MRNA] (ISOFORM B)</scope>
    <scope>TISSUE SPECIFICITY</scope>
</reference>
<reference key="2">
    <citation type="journal article" date="1998" name="Science">
        <title>Genome sequence of the nematode C. elegans: a platform for investigating biology.</title>
        <authorList>
            <consortium name="The C. elegans sequencing consortium"/>
        </authorList>
    </citation>
    <scope>NUCLEOTIDE SEQUENCE [LARGE SCALE GENOMIC DNA]</scope>
    <scope>ALTERNATIVE SPLICING</scope>
    <source>
        <strain>Bristol N2</strain>
    </source>
</reference>
<reference key="3">
    <citation type="journal article" date="1986" name="Genetics">
        <title>Mutations with dominant effects on the behavior and morphology of the nematode Caenorhabditis elegans.</title>
        <authorList>
            <person name="Park E.-C."/>
            <person name="Horvitz R.H."/>
        </authorList>
    </citation>
    <scope>MUTAGENESIS OF PRO-134 AND GLU-677</scope>
    <source>
        <strain>Bristol N2</strain>
    </source>
</reference>
<reference key="4">
    <citation type="journal article" date="1986" name="Genetics">
        <title>C. elegans unc-105 mutations affect muscle and are suppressed by other mutations that affect muscle.</title>
        <authorList>
            <person name="Park E.-C."/>
            <person name="Horvitz H.R."/>
        </authorList>
    </citation>
    <scope>MUTAGENESIS OF PRO-134 AND GLU-677</scope>
</reference>
<reference key="5">
    <citation type="journal article" date="1998" name="Neuron">
        <title>The nematode degenerin UNC-105 forms ion channels that are activated by degeneration- or hypercontraction-causing mutations.</title>
        <authorList>
            <person name="Garcia-Anoveros J."/>
            <person name="Garcia J.A."/>
            <person name="Liu J.-D."/>
            <person name="Corey D.P."/>
        </authorList>
    </citation>
    <scope>FUNCTION</scope>
</reference>
<reference key="6">
    <citation type="journal article" date="2004" name="J. Physiol. (Lond.)">
        <title>Patch clamp study of the UNC-105 degenerin and its interaction with the LET-2 collagen in Caenorhabditis elegans muscle.</title>
        <authorList>
            <person name="Jospin M."/>
            <person name="Mariol M.-C."/>
            <person name="Segalat L."/>
            <person name="Allard B."/>
        </authorList>
    </citation>
    <scope>FUNCTION</scope>
</reference>
<reference key="7">
    <citation type="journal article" date="2004" name="J. Physiol. (Lond.)">
        <title>An amiloride-sensitive H+-gated Na+ channel in Caenorhabditis elegans body wall muscle cells.</title>
        <authorList>
            <person name="Jospin M."/>
            <person name="Allard B."/>
        </authorList>
    </citation>
    <scope>FUNCTION</scope>
</reference>
<reference key="8">
    <citation type="journal article" date="2007" name="Mol. Cell. Proteomics">
        <title>Proteomics reveals N-linked glycoprotein diversity in Caenorhabditis elegans and suggests an atypical translocation mechanism for integral membrane proteins.</title>
        <authorList>
            <person name="Kaji H."/>
            <person name="Kamiie J."/>
            <person name="Kawakami H."/>
            <person name="Kido K."/>
            <person name="Yamauchi Y."/>
            <person name="Shinkawa T."/>
            <person name="Taoka M."/>
            <person name="Takahashi N."/>
            <person name="Isobe T."/>
        </authorList>
    </citation>
    <scope>GLYCOSYLATION [LARGE SCALE ANALYSIS] AT ASN-599</scope>
    <scope>IDENTIFICATION BY MASS SPECTROMETRY</scope>
    <source>
        <strain>Bristol N2</strain>
    </source>
</reference>
<accession>Q09274</accession>
<accession>A3FPK3</accession>
<keyword id="KW-0025">Alternative splicing</keyword>
<keyword id="KW-0217">Developmental protein</keyword>
<keyword id="KW-0221">Differentiation</keyword>
<keyword id="KW-0325">Glycoprotein</keyword>
<keyword id="KW-0407">Ion channel</keyword>
<keyword id="KW-0406">Ion transport</keyword>
<keyword id="KW-0472">Membrane</keyword>
<keyword id="KW-0517">Myogenesis</keyword>
<keyword id="KW-1185">Reference proteome</keyword>
<keyword id="KW-0915">Sodium</keyword>
<keyword id="KW-0894">Sodium channel</keyword>
<keyword id="KW-0739">Sodium transport</keyword>
<keyword id="KW-0812">Transmembrane</keyword>
<keyword id="KW-1133">Transmembrane helix</keyword>
<keyword id="KW-0813">Transport</keyword>
<protein>
    <recommendedName>
        <fullName>Degenerin-like protein unc-105</fullName>
    </recommendedName>
    <alternativeName>
        <fullName>Uncoordinated protein 105</fullName>
    </alternativeName>
</protein>
<sequence>MAEDRIKSKLRRPASIESTMSSRTKPRHKPSPMSILMPHLMVGESFRKYRPHGLRNIRMNGHLDWNQLRKSFEKQSTFHGISHAATADGKWRWFWYTAFTICLLALLIQIFFLISKYRQYGKTVDLDLKFENAPFPSITICNLNPYKKSAIQSNPNTKAMMEAYSRRIGSGDKTEGIAAALSATGGLHAKVRRAKRKAKGKPRLRDRRYHQAFAQCLCDIEQLTGDRKGSCFAAFKGKIEIDTNNTAGFMNLHTSRCLCQLDTVSKALWPCFPYSSWKEKLCSECVDNTGHCPMRFYKGNELYENIKEQVDLCLCHKEYNHCVSTRDDGIILEISPNDELNDLDIGKKIASQLSAQQEKQAEVTTTEAPTVTQALGFEELTDDIAITSQAQENLMFAVGEMSEKAKESMSYELDELVLKCSFNQKDCQMDRDFTLHYDNTFGNCYTFNYNRTAEVASHRAGANYGLRVLLYANVSEYLPTTEAVGFRITVHDKHIVPFPDAFGYSAPTGFMSSFGVRMKQFIRLEPPYGHCRHGGEDAATFVYTGFQYSVEACHRSCAQKVIVEACGCADPMYPVAEMFGNNTKPCQAVNMDQRECLRNTTLWLGELYSKGKEAIIPDCYCHQPCQETNYEVTYSSARWPSGSAKVMECLPGDFLCLEKYRKNAAMVQIFYEELNYETMQESPAYTLTSVLADLGGLTGLWIGASVVSLLEIVTLIVFATQAYVRKRKGSISAQSHHSVPVHRASRVSLNTLHKSSTTQSVKLSVMDIRSIKSIHSNHSSKSKQSILIEDLPPAIQEQSDDEEETTESSRTNGSCRYLAPGEDLPCLCKYHPDGSIRIMKALCPVHGYMVRRNYDYSVSNSEEEDAEDEVHREPEPFYSAPYEHRKK</sequence>
<name>UN105_CAEEL</name>
<dbReference type="EMBL" id="Z48045">
    <property type="protein sequence ID" value="CAA88101.2"/>
    <property type="molecule type" value="Genomic_DNA"/>
</dbReference>
<dbReference type="EMBL" id="Z48045">
    <property type="protein sequence ID" value="CAM33500.1"/>
    <property type="molecule type" value="Genomic_DNA"/>
</dbReference>
<dbReference type="PIR" id="H88226">
    <property type="entry name" value="H88226"/>
</dbReference>
<dbReference type="PIR" id="T19878">
    <property type="entry name" value="T19878"/>
</dbReference>
<dbReference type="RefSeq" id="NP_001122595.1">
    <molecule id="Q09274-1"/>
    <property type="nucleotide sequence ID" value="NM_001129123.3"/>
</dbReference>
<dbReference type="RefSeq" id="NP_495702.1">
    <molecule id="Q09274-2"/>
    <property type="nucleotide sequence ID" value="NM_063301.6"/>
</dbReference>
<dbReference type="FunCoup" id="Q09274">
    <property type="interactions" value="21"/>
</dbReference>
<dbReference type="STRING" id="6239.C41C4.5e.2"/>
<dbReference type="TCDB" id="1.A.6.2.3">
    <property type="family name" value="the epithelial na(+) channel (enac) family"/>
</dbReference>
<dbReference type="GlyCosmos" id="Q09274">
    <property type="glycosylation" value="5 sites, No reported glycans"/>
</dbReference>
<dbReference type="iPTMnet" id="Q09274"/>
<dbReference type="PaxDb" id="6239-C41C4.5e.1"/>
<dbReference type="EnsemblMetazoa" id="C41C4.5a.1">
    <molecule id="Q09274-2"/>
    <property type="protein sequence ID" value="C41C4.5a.1"/>
    <property type="gene ID" value="WBGene00006832"/>
</dbReference>
<dbReference type="EnsemblMetazoa" id="C41C4.5b.1">
    <molecule id="Q09274-1"/>
    <property type="protein sequence ID" value="C41C4.5b.1"/>
    <property type="gene ID" value="WBGene00006832"/>
</dbReference>
<dbReference type="GeneID" id="174306"/>
<dbReference type="KEGG" id="cel:CELE_C41C4.5"/>
<dbReference type="UCSC" id="C41C4.5a.1">
    <molecule id="Q09274-1"/>
    <property type="organism name" value="c. elegans"/>
</dbReference>
<dbReference type="AGR" id="WB:WBGene00006832"/>
<dbReference type="CTD" id="174306"/>
<dbReference type="WormBase" id="C41C4.5a">
    <molecule id="Q09274-2"/>
    <property type="protein sequence ID" value="CE23585"/>
    <property type="gene ID" value="WBGene00006832"/>
    <property type="gene designation" value="unc-105"/>
</dbReference>
<dbReference type="WormBase" id="C41C4.5b">
    <molecule id="Q09274-1"/>
    <property type="protein sequence ID" value="CE40690"/>
    <property type="gene ID" value="WBGene00006832"/>
    <property type="gene designation" value="unc-105"/>
</dbReference>
<dbReference type="eggNOG" id="KOG4294">
    <property type="taxonomic scope" value="Eukaryota"/>
</dbReference>
<dbReference type="InParanoid" id="Q09274"/>
<dbReference type="OrthoDB" id="5874059at2759"/>
<dbReference type="PhylomeDB" id="Q09274"/>
<dbReference type="Reactome" id="R-CEL-2672351">
    <property type="pathway name" value="Stimuli-sensing channels"/>
</dbReference>
<dbReference type="Reactome" id="R-CEL-9730628">
    <property type="pathway name" value="Sensory perception of salty taste"/>
</dbReference>
<dbReference type="PRO" id="PR:Q09274"/>
<dbReference type="Proteomes" id="UP000001940">
    <property type="component" value="Chromosome II"/>
</dbReference>
<dbReference type="Bgee" id="WBGene00006832">
    <property type="expression patterns" value="Expressed in larva and 3 other cell types or tissues"/>
</dbReference>
<dbReference type="ExpressionAtlas" id="Q09274">
    <property type="expression patterns" value="baseline and differential"/>
</dbReference>
<dbReference type="GO" id="GO:0016020">
    <property type="term" value="C:membrane"/>
    <property type="evidence" value="ECO:0000305"/>
    <property type="project" value="UniProtKB"/>
</dbReference>
<dbReference type="GO" id="GO:0005886">
    <property type="term" value="C:plasma membrane"/>
    <property type="evidence" value="ECO:0000318"/>
    <property type="project" value="GO_Central"/>
</dbReference>
<dbReference type="GO" id="GO:0015280">
    <property type="term" value="F:ligand-gated sodium channel activity"/>
    <property type="evidence" value="ECO:0000318"/>
    <property type="project" value="GO_Central"/>
</dbReference>
<dbReference type="GO" id="GO:0005216">
    <property type="term" value="F:monoatomic ion channel activity"/>
    <property type="evidence" value="ECO:0000314"/>
    <property type="project" value="UniProtKB"/>
</dbReference>
<dbReference type="GO" id="GO:0006816">
    <property type="term" value="P:calcium ion transport"/>
    <property type="evidence" value="ECO:0000314"/>
    <property type="project" value="UniProtKB"/>
</dbReference>
<dbReference type="GO" id="GO:0030154">
    <property type="term" value="P:cell differentiation"/>
    <property type="evidence" value="ECO:0007669"/>
    <property type="project" value="UniProtKB-KW"/>
</dbReference>
<dbReference type="GO" id="GO:0015693">
    <property type="term" value="P:magnesium ion transport"/>
    <property type="evidence" value="ECO:0000314"/>
    <property type="project" value="UniProtKB"/>
</dbReference>
<dbReference type="GO" id="GO:0007517">
    <property type="term" value="P:muscle organ development"/>
    <property type="evidence" value="ECO:0000315"/>
    <property type="project" value="UniProtKB"/>
</dbReference>
<dbReference type="GO" id="GO:0035725">
    <property type="term" value="P:sodium ion transmembrane transport"/>
    <property type="evidence" value="ECO:0000318"/>
    <property type="project" value="GO_Central"/>
</dbReference>
<dbReference type="FunFam" id="2.60.470.10:FF:000004">
    <property type="entry name" value="Degenerin unc-8"/>
    <property type="match status" value="1"/>
</dbReference>
<dbReference type="Gene3D" id="2.60.470.10">
    <property type="entry name" value="Acid-sensing ion channels like domains"/>
    <property type="match status" value="1"/>
</dbReference>
<dbReference type="Gene3D" id="1.10.287.770">
    <property type="entry name" value="YojJ-like"/>
    <property type="match status" value="1"/>
</dbReference>
<dbReference type="InterPro" id="IPR004726">
    <property type="entry name" value="Deg-1"/>
</dbReference>
<dbReference type="InterPro" id="IPR001873">
    <property type="entry name" value="ENaC"/>
</dbReference>
<dbReference type="InterPro" id="IPR020903">
    <property type="entry name" value="ENaC_CS"/>
</dbReference>
<dbReference type="NCBIfam" id="TIGR00867">
    <property type="entry name" value="deg-1"/>
    <property type="match status" value="1"/>
</dbReference>
<dbReference type="PANTHER" id="PTHR11690">
    <property type="entry name" value="AMILORIDE-SENSITIVE SODIUM CHANNEL-RELATED"/>
    <property type="match status" value="1"/>
</dbReference>
<dbReference type="PANTHER" id="PTHR11690:SF279">
    <property type="entry name" value="DEGENERIN-LIKE PROTEIN UNC-105"/>
    <property type="match status" value="1"/>
</dbReference>
<dbReference type="Pfam" id="PF00858">
    <property type="entry name" value="ASC"/>
    <property type="match status" value="1"/>
</dbReference>
<dbReference type="PRINTS" id="PR01078">
    <property type="entry name" value="AMINACHANNEL"/>
</dbReference>
<dbReference type="PROSITE" id="PS01206">
    <property type="entry name" value="ASC"/>
    <property type="match status" value="1"/>
</dbReference>
<organism>
    <name type="scientific">Caenorhabditis elegans</name>
    <dbReference type="NCBI Taxonomy" id="6239"/>
    <lineage>
        <taxon>Eukaryota</taxon>
        <taxon>Metazoa</taxon>
        <taxon>Ecdysozoa</taxon>
        <taxon>Nematoda</taxon>
        <taxon>Chromadorea</taxon>
        <taxon>Rhabditida</taxon>
        <taxon>Rhabditina</taxon>
        <taxon>Rhabditomorpha</taxon>
        <taxon>Rhabditoidea</taxon>
        <taxon>Rhabditidae</taxon>
        <taxon>Peloderinae</taxon>
        <taxon>Caenorhabditis</taxon>
    </lineage>
</organism>
<gene>
    <name type="primary">unc-105</name>
    <name type="ORF">C41C4.5</name>
</gene>